<evidence type="ECO:0000250" key="1"/>
<evidence type="ECO:0000255" key="2">
    <source>
        <dbReference type="HAMAP-Rule" id="MF_00403"/>
    </source>
</evidence>
<evidence type="ECO:0000256" key="3">
    <source>
        <dbReference type="SAM" id="MobiDB-lite"/>
    </source>
</evidence>
<evidence type="ECO:0000305" key="4"/>
<name>RS12_ROSCS</name>
<protein>
    <recommendedName>
        <fullName evidence="2">Small ribosomal subunit protein uS12</fullName>
    </recommendedName>
    <alternativeName>
        <fullName evidence="4">30S ribosomal protein S12</fullName>
    </alternativeName>
</protein>
<dbReference type="EMBL" id="CP000804">
    <property type="protein sequence ID" value="ABU60064.1"/>
    <property type="molecule type" value="Genomic_DNA"/>
</dbReference>
<dbReference type="RefSeq" id="WP_011955950.1">
    <property type="nucleotide sequence ID" value="NC_009767.1"/>
</dbReference>
<dbReference type="SMR" id="A7NR68"/>
<dbReference type="STRING" id="383372.Rcas_4031"/>
<dbReference type="KEGG" id="rca:Rcas_4031"/>
<dbReference type="eggNOG" id="COG0048">
    <property type="taxonomic scope" value="Bacteria"/>
</dbReference>
<dbReference type="HOGENOM" id="CLU_104295_1_2_0"/>
<dbReference type="OrthoDB" id="9802366at2"/>
<dbReference type="Proteomes" id="UP000000263">
    <property type="component" value="Chromosome"/>
</dbReference>
<dbReference type="GO" id="GO:0015935">
    <property type="term" value="C:small ribosomal subunit"/>
    <property type="evidence" value="ECO:0007669"/>
    <property type="project" value="InterPro"/>
</dbReference>
<dbReference type="GO" id="GO:0019843">
    <property type="term" value="F:rRNA binding"/>
    <property type="evidence" value="ECO:0007669"/>
    <property type="project" value="UniProtKB-UniRule"/>
</dbReference>
<dbReference type="GO" id="GO:0003735">
    <property type="term" value="F:structural constituent of ribosome"/>
    <property type="evidence" value="ECO:0007669"/>
    <property type="project" value="InterPro"/>
</dbReference>
<dbReference type="GO" id="GO:0000049">
    <property type="term" value="F:tRNA binding"/>
    <property type="evidence" value="ECO:0007669"/>
    <property type="project" value="UniProtKB-UniRule"/>
</dbReference>
<dbReference type="GO" id="GO:0006412">
    <property type="term" value="P:translation"/>
    <property type="evidence" value="ECO:0007669"/>
    <property type="project" value="UniProtKB-UniRule"/>
</dbReference>
<dbReference type="CDD" id="cd03368">
    <property type="entry name" value="Ribosomal_S12"/>
    <property type="match status" value="1"/>
</dbReference>
<dbReference type="FunFam" id="2.40.50.140:FF:000001">
    <property type="entry name" value="30S ribosomal protein S12"/>
    <property type="match status" value="1"/>
</dbReference>
<dbReference type="Gene3D" id="2.40.50.140">
    <property type="entry name" value="Nucleic acid-binding proteins"/>
    <property type="match status" value="1"/>
</dbReference>
<dbReference type="HAMAP" id="MF_00403_B">
    <property type="entry name" value="Ribosomal_uS12_B"/>
    <property type="match status" value="1"/>
</dbReference>
<dbReference type="InterPro" id="IPR012340">
    <property type="entry name" value="NA-bd_OB-fold"/>
</dbReference>
<dbReference type="InterPro" id="IPR006032">
    <property type="entry name" value="Ribosomal_uS12"/>
</dbReference>
<dbReference type="InterPro" id="IPR005679">
    <property type="entry name" value="Ribosomal_uS12_bac"/>
</dbReference>
<dbReference type="NCBIfam" id="TIGR00981">
    <property type="entry name" value="rpsL_bact"/>
    <property type="match status" value="1"/>
</dbReference>
<dbReference type="PANTHER" id="PTHR11652">
    <property type="entry name" value="30S RIBOSOMAL PROTEIN S12 FAMILY MEMBER"/>
    <property type="match status" value="1"/>
</dbReference>
<dbReference type="Pfam" id="PF00164">
    <property type="entry name" value="Ribosom_S12_S23"/>
    <property type="match status" value="1"/>
</dbReference>
<dbReference type="PIRSF" id="PIRSF002133">
    <property type="entry name" value="Ribosomal_S12/S23"/>
    <property type="match status" value="1"/>
</dbReference>
<dbReference type="PRINTS" id="PR01034">
    <property type="entry name" value="RIBOSOMALS12"/>
</dbReference>
<dbReference type="SUPFAM" id="SSF50249">
    <property type="entry name" value="Nucleic acid-binding proteins"/>
    <property type="match status" value="1"/>
</dbReference>
<dbReference type="PROSITE" id="PS00055">
    <property type="entry name" value="RIBOSOMAL_S12"/>
    <property type="match status" value="1"/>
</dbReference>
<gene>
    <name evidence="2" type="primary">rpsL</name>
    <name type="ordered locus">Rcas_4031</name>
</gene>
<sequence>MPTINQLVRKPRKRVTKKVKAPALRFSLNVLKGKLTRGKGSPFKRGVCTQVRTMTPKKPNSALRKIARVRLSNGMEVTAYIPGEGHNLQEHSVVLIRGGRVKDLPGVRYHIVRGTLDAQGVANRKQGRSKYGTKKASAVPAKKK</sequence>
<organism>
    <name type="scientific">Roseiflexus castenholzii (strain DSM 13941 / HLO8)</name>
    <dbReference type="NCBI Taxonomy" id="383372"/>
    <lineage>
        <taxon>Bacteria</taxon>
        <taxon>Bacillati</taxon>
        <taxon>Chloroflexota</taxon>
        <taxon>Chloroflexia</taxon>
        <taxon>Chloroflexales</taxon>
        <taxon>Roseiflexineae</taxon>
        <taxon>Roseiflexaceae</taxon>
        <taxon>Roseiflexus</taxon>
    </lineage>
</organism>
<reference key="1">
    <citation type="submission" date="2007-08" db="EMBL/GenBank/DDBJ databases">
        <title>Complete sequence of Roseiflexus castenholzii DSM 13941.</title>
        <authorList>
            <consortium name="US DOE Joint Genome Institute"/>
            <person name="Copeland A."/>
            <person name="Lucas S."/>
            <person name="Lapidus A."/>
            <person name="Barry K."/>
            <person name="Glavina del Rio T."/>
            <person name="Dalin E."/>
            <person name="Tice H."/>
            <person name="Pitluck S."/>
            <person name="Thompson L.S."/>
            <person name="Brettin T."/>
            <person name="Bruce D."/>
            <person name="Detter J.C."/>
            <person name="Han C."/>
            <person name="Tapia R."/>
            <person name="Schmutz J."/>
            <person name="Larimer F."/>
            <person name="Land M."/>
            <person name="Hauser L."/>
            <person name="Kyrpides N."/>
            <person name="Mikhailova N."/>
            <person name="Bryant D.A."/>
            <person name="Hanada S."/>
            <person name="Tsukatani Y."/>
            <person name="Richardson P."/>
        </authorList>
    </citation>
    <scope>NUCLEOTIDE SEQUENCE [LARGE SCALE GENOMIC DNA]</scope>
    <source>
        <strain>DSM 13941 / HLO8</strain>
    </source>
</reference>
<comment type="function">
    <text evidence="2">With S4 and S5 plays an important role in translational accuracy.</text>
</comment>
<comment type="function">
    <text evidence="2">Interacts with and stabilizes bases of the 16S rRNA that are involved in tRNA selection in the A site and with the mRNA backbone. Located at the interface of the 30S and 50S subunits, it traverses the body of the 30S subunit contacting proteins on the other side and probably holding the rRNA structure together. The combined cluster of proteins S8, S12 and S17 appears to hold together the shoulder and platform of the 30S subunit.</text>
</comment>
<comment type="subunit">
    <text evidence="2">Part of the 30S ribosomal subunit. Contacts proteins S8 and S17. May interact with IF1 in the 30S initiation complex.</text>
</comment>
<comment type="similarity">
    <text evidence="2">Belongs to the universal ribosomal protein uS12 family.</text>
</comment>
<keyword id="KW-0488">Methylation</keyword>
<keyword id="KW-1185">Reference proteome</keyword>
<keyword id="KW-0687">Ribonucleoprotein</keyword>
<keyword id="KW-0689">Ribosomal protein</keyword>
<keyword id="KW-0694">RNA-binding</keyword>
<keyword id="KW-0699">rRNA-binding</keyword>
<keyword id="KW-0820">tRNA-binding</keyword>
<proteinExistence type="inferred from homology"/>
<accession>A7NR68</accession>
<feature type="chain" id="PRO_1000080411" description="Small ribosomal subunit protein uS12">
    <location>
        <begin position="1"/>
        <end position="144"/>
    </location>
</feature>
<feature type="region of interest" description="Disordered" evidence="3">
    <location>
        <begin position="121"/>
        <end position="144"/>
    </location>
</feature>
<feature type="modified residue" description="3-methylthioaspartic acid" evidence="1">
    <location>
        <position position="103"/>
    </location>
</feature>